<accession>O50606</accession>
<accession>Q5SHC4</accession>
<keyword id="KW-0002">3D-structure</keyword>
<keyword id="KW-0227">DNA damage</keyword>
<keyword id="KW-0234">DNA repair</keyword>
<keyword id="KW-0238">DNA-binding</keyword>
<keyword id="KW-0326">Glycosidase</keyword>
<keyword id="KW-0378">Hydrolase</keyword>
<keyword id="KW-0456">Lyase</keyword>
<keyword id="KW-0479">Metal-binding</keyword>
<keyword id="KW-0511">Multifunctional enzyme</keyword>
<keyword id="KW-1185">Reference proteome</keyword>
<keyword id="KW-0862">Zinc</keyword>
<keyword id="KW-0863">Zinc-finger</keyword>
<comment type="function">
    <text evidence="1">Involved in base excision repair of DNA damaged by oxidation or by mutagenic agents. Acts as a DNA glycosylase that recognizes and removes damaged bases. Has a preference for oxidized purines, such as 7,8-dihydro-8-oxoguanine (8-oxoG). Has AP (apurinic/apyrimidinic) lyase activity and introduces nicks in the DNA strand. Cleaves the DNA backbone by beta-delta elimination to generate a single-strand break at the site of the removed base with both 3'- and 5'-phosphates (By similarity).</text>
</comment>
<comment type="catalytic activity">
    <reaction>
        <text>Hydrolysis of DNA containing ring-opened 7-methylguanine residues, releasing 2,6-diamino-4-hydroxy-5-(N-methyl)formamidopyrimidine.</text>
        <dbReference type="EC" id="3.2.2.23"/>
    </reaction>
</comment>
<comment type="catalytic activity">
    <reaction>
        <text>2'-deoxyribonucleotide-(2'-deoxyribose 5'-phosphate)-2'-deoxyribonucleotide-DNA = a 3'-end 2'-deoxyribonucleotide-(2,3-dehydro-2,3-deoxyribose 5'-phosphate)-DNA + a 5'-end 5'-phospho-2'-deoxyribonucleoside-DNA + H(+)</text>
        <dbReference type="Rhea" id="RHEA:66592"/>
        <dbReference type="Rhea" id="RHEA-COMP:13180"/>
        <dbReference type="Rhea" id="RHEA-COMP:16897"/>
        <dbReference type="Rhea" id="RHEA-COMP:17067"/>
        <dbReference type="ChEBI" id="CHEBI:15378"/>
        <dbReference type="ChEBI" id="CHEBI:136412"/>
        <dbReference type="ChEBI" id="CHEBI:157695"/>
        <dbReference type="ChEBI" id="CHEBI:167181"/>
        <dbReference type="EC" id="4.2.99.18"/>
    </reaction>
</comment>
<comment type="cofactor">
    <cofactor>
        <name>Zn(2+)</name>
        <dbReference type="ChEBI" id="CHEBI:29105"/>
    </cofactor>
    <text>Binds 1 zinc ion per subunit.</text>
</comment>
<comment type="subunit">
    <text>Monomer.</text>
</comment>
<comment type="similarity">
    <text evidence="2">Belongs to the FPG family.</text>
</comment>
<dbReference type="EC" id="3.2.2.23"/>
<dbReference type="EC" id="4.2.99.18"/>
<dbReference type="EMBL" id="AB008520">
    <property type="protein sequence ID" value="BAA24892.1"/>
    <property type="molecule type" value="Genomic_DNA"/>
</dbReference>
<dbReference type="EMBL" id="AP008226">
    <property type="protein sequence ID" value="BAD71629.1"/>
    <property type="molecule type" value="Genomic_DNA"/>
</dbReference>
<dbReference type="RefSeq" id="WP_011173830.1">
    <property type="nucleotide sequence ID" value="NC_006461.1"/>
</dbReference>
<dbReference type="RefSeq" id="YP_145072.1">
    <property type="nucleotide sequence ID" value="NC_006461.1"/>
</dbReference>
<dbReference type="PDB" id="1EE8">
    <property type="method" value="X-ray"/>
    <property type="resolution" value="1.90 A"/>
    <property type="chains" value="A/B=2-267"/>
</dbReference>
<dbReference type="PDBsum" id="1EE8"/>
<dbReference type="SMR" id="O50606"/>
<dbReference type="EnsemblBacteria" id="BAD71629">
    <property type="protein sequence ID" value="BAD71629"/>
    <property type="gene ID" value="BAD71629"/>
</dbReference>
<dbReference type="GeneID" id="3169771"/>
<dbReference type="KEGG" id="ttj:TTHA1806"/>
<dbReference type="PATRIC" id="fig|300852.9.peg.1777"/>
<dbReference type="eggNOG" id="COG0266">
    <property type="taxonomic scope" value="Bacteria"/>
</dbReference>
<dbReference type="HOGENOM" id="CLU_038423_1_2_0"/>
<dbReference type="PhylomeDB" id="O50606"/>
<dbReference type="BRENDA" id="3.2.2.23">
    <property type="organism ID" value="2305"/>
</dbReference>
<dbReference type="EvolutionaryTrace" id="O50606"/>
<dbReference type="Proteomes" id="UP000000532">
    <property type="component" value="Chromosome"/>
</dbReference>
<dbReference type="GO" id="GO:0034039">
    <property type="term" value="F:8-oxo-7,8-dihydroguanine DNA N-glycosylase activity"/>
    <property type="evidence" value="ECO:0007669"/>
    <property type="project" value="TreeGrafter"/>
</dbReference>
<dbReference type="GO" id="GO:0140078">
    <property type="term" value="F:class I DNA-(apurinic or apyrimidinic site) endonuclease activity"/>
    <property type="evidence" value="ECO:0007669"/>
    <property type="project" value="UniProtKB-EC"/>
</dbReference>
<dbReference type="GO" id="GO:0003684">
    <property type="term" value="F:damaged DNA binding"/>
    <property type="evidence" value="ECO:0007669"/>
    <property type="project" value="InterPro"/>
</dbReference>
<dbReference type="GO" id="GO:0008270">
    <property type="term" value="F:zinc ion binding"/>
    <property type="evidence" value="ECO:0007669"/>
    <property type="project" value="UniProtKB-UniRule"/>
</dbReference>
<dbReference type="GO" id="GO:0006284">
    <property type="term" value="P:base-excision repair"/>
    <property type="evidence" value="ECO:0007669"/>
    <property type="project" value="InterPro"/>
</dbReference>
<dbReference type="CDD" id="cd08966">
    <property type="entry name" value="EcFpg-like_N"/>
    <property type="match status" value="1"/>
</dbReference>
<dbReference type="FunFam" id="1.10.8.50:FF:000003">
    <property type="entry name" value="Formamidopyrimidine-DNA glycosylase"/>
    <property type="match status" value="1"/>
</dbReference>
<dbReference type="Gene3D" id="1.10.8.50">
    <property type="match status" value="1"/>
</dbReference>
<dbReference type="Gene3D" id="3.20.190.10">
    <property type="entry name" value="MutM-like, N-terminal"/>
    <property type="match status" value="1"/>
</dbReference>
<dbReference type="HAMAP" id="MF_00103">
    <property type="entry name" value="Fapy_DNA_glycosyl"/>
    <property type="match status" value="1"/>
</dbReference>
<dbReference type="InterPro" id="IPR015886">
    <property type="entry name" value="DNA_glyclase/AP_lyase_DNA-bd"/>
</dbReference>
<dbReference type="InterPro" id="IPR015887">
    <property type="entry name" value="DNA_glyclase_Znf_dom_DNA_BS"/>
</dbReference>
<dbReference type="InterPro" id="IPR020629">
    <property type="entry name" value="Formamido-pyr_DNA_Glyclase"/>
</dbReference>
<dbReference type="InterPro" id="IPR012319">
    <property type="entry name" value="FPG_cat"/>
</dbReference>
<dbReference type="InterPro" id="IPR035937">
    <property type="entry name" value="MutM-like_N-ter"/>
</dbReference>
<dbReference type="InterPro" id="IPR010979">
    <property type="entry name" value="Ribosomal_uS13-like_H2TH"/>
</dbReference>
<dbReference type="InterPro" id="IPR000214">
    <property type="entry name" value="Znf_DNA_glyclase/AP_lyase"/>
</dbReference>
<dbReference type="InterPro" id="IPR010663">
    <property type="entry name" value="Znf_FPG/IleRS"/>
</dbReference>
<dbReference type="NCBIfam" id="TIGR00577">
    <property type="entry name" value="fpg"/>
    <property type="match status" value="1"/>
</dbReference>
<dbReference type="NCBIfam" id="NF002211">
    <property type="entry name" value="PRK01103.1"/>
    <property type="match status" value="1"/>
</dbReference>
<dbReference type="NCBIfam" id="NF011386">
    <property type="entry name" value="PRK14811.1"/>
    <property type="match status" value="1"/>
</dbReference>
<dbReference type="PANTHER" id="PTHR22993">
    <property type="entry name" value="FORMAMIDOPYRIMIDINE-DNA GLYCOSYLASE"/>
    <property type="match status" value="1"/>
</dbReference>
<dbReference type="PANTHER" id="PTHR22993:SF9">
    <property type="entry name" value="FORMAMIDOPYRIMIDINE-DNA GLYCOSYLASE"/>
    <property type="match status" value="1"/>
</dbReference>
<dbReference type="Pfam" id="PF01149">
    <property type="entry name" value="Fapy_DNA_glyco"/>
    <property type="match status" value="1"/>
</dbReference>
<dbReference type="Pfam" id="PF06831">
    <property type="entry name" value="H2TH"/>
    <property type="match status" value="1"/>
</dbReference>
<dbReference type="Pfam" id="PF06827">
    <property type="entry name" value="zf-FPG_IleRS"/>
    <property type="match status" value="1"/>
</dbReference>
<dbReference type="SMART" id="SM00898">
    <property type="entry name" value="Fapy_DNA_glyco"/>
    <property type="match status" value="1"/>
</dbReference>
<dbReference type="SMART" id="SM01232">
    <property type="entry name" value="H2TH"/>
    <property type="match status" value="1"/>
</dbReference>
<dbReference type="SUPFAM" id="SSF57716">
    <property type="entry name" value="Glucocorticoid receptor-like (DNA-binding domain)"/>
    <property type="match status" value="1"/>
</dbReference>
<dbReference type="SUPFAM" id="SSF81624">
    <property type="entry name" value="N-terminal domain of MutM-like DNA repair proteins"/>
    <property type="match status" value="1"/>
</dbReference>
<dbReference type="SUPFAM" id="SSF46946">
    <property type="entry name" value="S13-like H2TH domain"/>
    <property type="match status" value="1"/>
</dbReference>
<dbReference type="PROSITE" id="PS51068">
    <property type="entry name" value="FPG_CAT"/>
    <property type="match status" value="1"/>
</dbReference>
<dbReference type="PROSITE" id="PS01242">
    <property type="entry name" value="ZF_FPG_1"/>
    <property type="match status" value="1"/>
</dbReference>
<dbReference type="PROSITE" id="PS51066">
    <property type="entry name" value="ZF_FPG_2"/>
    <property type="match status" value="1"/>
</dbReference>
<evidence type="ECO:0000250" key="1"/>
<evidence type="ECO:0000305" key="2"/>
<evidence type="ECO:0007829" key="3">
    <source>
        <dbReference type="PDB" id="1EE8"/>
    </source>
</evidence>
<name>FPG_THET8</name>
<protein>
    <recommendedName>
        <fullName>Formamidopyrimidine-DNA glycosylase</fullName>
        <shortName>Fapy-DNA glycosylase</shortName>
        <ecNumber>3.2.2.23</ecNumber>
    </recommendedName>
    <alternativeName>
        <fullName>DNA-(apurinic or apyrimidinic site) lyase MutM</fullName>
        <shortName>AP lyase MutM</shortName>
        <ecNumber>4.2.99.18</ecNumber>
    </alternativeName>
</protein>
<proteinExistence type="evidence at protein level"/>
<feature type="initiator methionine" description="Removed">
    <location>
        <position position="1"/>
    </location>
</feature>
<feature type="chain" id="PRO_0000170880" description="Formamidopyrimidine-DNA glycosylase">
    <location>
        <begin position="2"/>
        <end position="267"/>
    </location>
</feature>
<feature type="zinc finger region" description="FPG-type">
    <location>
        <begin position="230"/>
        <end position="264"/>
    </location>
</feature>
<feature type="active site" description="Schiff-base intermediate with DNA" evidence="2">
    <location>
        <position position="2"/>
    </location>
</feature>
<feature type="active site" description="Proton donor" evidence="2">
    <location>
        <position position="3"/>
    </location>
</feature>
<feature type="active site" description="Proton donor; for beta-elimination activity" evidence="2">
    <location>
        <position position="53"/>
    </location>
</feature>
<feature type="active site" description="Proton donor; for delta-elimination activity" evidence="2">
    <location>
        <position position="254"/>
    </location>
</feature>
<feature type="binding site" evidence="1">
    <location>
        <position position="82"/>
    </location>
    <ligand>
        <name>DNA</name>
        <dbReference type="ChEBI" id="CHEBI:16991"/>
    </ligand>
</feature>
<feature type="binding site" evidence="1">
    <location>
        <position position="100"/>
    </location>
    <ligand>
        <name>DNA</name>
        <dbReference type="ChEBI" id="CHEBI:16991"/>
    </ligand>
</feature>
<feature type="helix" evidence="3">
    <location>
        <begin position="4"/>
        <end position="18"/>
    </location>
</feature>
<feature type="strand" evidence="3">
    <location>
        <begin position="22"/>
        <end position="27"/>
    </location>
</feature>
<feature type="turn" evidence="3">
    <location>
        <begin position="31"/>
        <end position="33"/>
    </location>
</feature>
<feature type="strand" evidence="3">
    <location>
        <begin position="34"/>
        <end position="36"/>
    </location>
</feature>
<feature type="helix" evidence="3">
    <location>
        <begin position="37"/>
        <end position="40"/>
    </location>
</feature>
<feature type="strand" evidence="3">
    <location>
        <begin position="43"/>
        <end position="51"/>
    </location>
</feature>
<feature type="strand" evidence="3">
    <location>
        <begin position="54"/>
        <end position="59"/>
    </location>
</feature>
<feature type="turn" evidence="3">
    <location>
        <begin position="60"/>
        <end position="62"/>
    </location>
</feature>
<feature type="strand" evidence="3">
    <location>
        <begin position="63"/>
        <end position="68"/>
    </location>
</feature>
<feature type="turn" evidence="3">
    <location>
        <begin position="70"/>
        <end position="72"/>
    </location>
</feature>
<feature type="strand" evidence="3">
    <location>
        <begin position="74"/>
        <end position="78"/>
    </location>
</feature>
<feature type="strand" evidence="3">
    <location>
        <begin position="83"/>
        <end position="91"/>
    </location>
</feature>
<feature type="strand" evidence="3">
    <location>
        <begin position="93"/>
        <end position="97"/>
    </location>
</feature>
<feature type="strand" evidence="3">
    <location>
        <begin position="104"/>
        <end position="109"/>
    </location>
</feature>
<feature type="helix" evidence="3">
    <location>
        <begin position="118"/>
        <end position="121"/>
    </location>
</feature>
<feature type="helix" evidence="3">
    <location>
        <begin position="133"/>
        <end position="141"/>
    </location>
</feature>
<feature type="helix" evidence="3">
    <location>
        <begin position="147"/>
        <end position="153"/>
    </location>
</feature>
<feature type="strand" evidence="3">
    <location>
        <begin position="154"/>
        <end position="157"/>
    </location>
</feature>
<feature type="helix" evidence="3">
    <location>
        <begin position="162"/>
        <end position="171"/>
    </location>
</feature>
<feature type="strand" evidence="3">
    <location>
        <begin position="176"/>
        <end position="179"/>
    </location>
</feature>
<feature type="helix" evidence="3">
    <location>
        <begin position="180"/>
        <end position="182"/>
    </location>
</feature>
<feature type="helix" evidence="3">
    <location>
        <begin position="185"/>
        <end position="204"/>
    </location>
</feature>
<feature type="helix" evidence="3">
    <location>
        <begin position="226"/>
        <end position="228"/>
    </location>
</feature>
<feature type="turn" evidence="3">
    <location>
        <begin position="240"/>
        <end position="242"/>
    </location>
</feature>
<feature type="strand" evidence="3">
    <location>
        <begin position="247"/>
        <end position="253"/>
    </location>
</feature>
<feature type="strand" evidence="3">
    <location>
        <begin position="255"/>
        <end position="258"/>
    </location>
</feature>
<feature type="turn" evidence="3">
    <location>
        <begin position="260"/>
        <end position="264"/>
    </location>
</feature>
<reference key="1">
    <citation type="journal article" date="1998" name="Nucleic Acids Res.">
        <title>Thermostable repair enzyme for oxidative DNA damage from extremely thermophilic bacterium, Thermus thermophilus HB8.</title>
        <authorList>
            <person name="Mikawa T."/>
            <person name="Kato R."/>
            <person name="Sugahara M."/>
            <person name="Kuramitsu S."/>
        </authorList>
    </citation>
    <scope>NUCLEOTIDE SEQUENCE [GENOMIC DNA]</scope>
    <scope>CHARACTERIZATION</scope>
</reference>
<reference key="2">
    <citation type="submission" date="2004-11" db="EMBL/GenBank/DDBJ databases">
        <title>Complete genome sequence of Thermus thermophilus HB8.</title>
        <authorList>
            <person name="Masui R."/>
            <person name="Kurokawa K."/>
            <person name="Nakagawa N."/>
            <person name="Tokunaga F."/>
            <person name="Koyama Y."/>
            <person name="Shibata T."/>
            <person name="Oshima T."/>
            <person name="Yokoyama S."/>
            <person name="Yasunaga T."/>
            <person name="Kuramitsu S."/>
        </authorList>
    </citation>
    <scope>NUCLEOTIDE SEQUENCE [LARGE SCALE GENOMIC DNA]</scope>
    <source>
        <strain>ATCC 27634 / DSM 579 / HB8</strain>
    </source>
</reference>
<reference key="3">
    <citation type="journal article" date="2000" name="EMBO J.">
        <title>Crystal structure of a repair enzyme of oxidatively damaged DNA, MutM (Fpg), from an extreme thermophile, Thermus thermophilus HB8.</title>
        <authorList>
            <person name="Sugahara M."/>
            <person name="Mikawa T."/>
            <person name="Kumasaka T."/>
            <person name="Yamamoto M."/>
            <person name="Kato R."/>
            <person name="Fukuyama K."/>
            <person name="Inoue Y."/>
            <person name="Kuramitsu S."/>
        </authorList>
    </citation>
    <scope>X-RAY CRYSTALLOGRAPHY (1.9 ANGSTROMS)</scope>
</reference>
<organism>
    <name type="scientific">Thermus thermophilus (strain ATCC 27634 / DSM 579 / HB8)</name>
    <dbReference type="NCBI Taxonomy" id="300852"/>
    <lineage>
        <taxon>Bacteria</taxon>
        <taxon>Thermotogati</taxon>
        <taxon>Deinococcota</taxon>
        <taxon>Deinococci</taxon>
        <taxon>Thermales</taxon>
        <taxon>Thermaceae</taxon>
        <taxon>Thermus</taxon>
    </lineage>
</organism>
<gene>
    <name type="primary">mutM</name>
    <name type="synonym">fpg</name>
    <name type="ordered locus">TTHA1806</name>
</gene>
<sequence length="267" mass="29915">MPELPEVETTRRRLRPLVLGQTLRQVVHRDPARYRNTALAEGRRILEVDRRGKFLLFALEGGVELVAHLGMTGGFRLEPTPHTRAALVLEGRTLYFHDPRRFGRLFGVRRGDYREIPLLLRLGPEPLSEAFAFPGFFRGLKESARPLKALLLDQRLAAGVGNIYADEALFRARLSPFRPARSLTEEEARRLYRALREVLAEAVELGGSTLSDQSYRQPDGLPGGFQTRHAVYGREGLPCPACGRPVERRVVAGRGTHFCPTCQGEGP</sequence>